<evidence type="ECO:0000305" key="1"/>
<sequence length="573" mass="65635">MLLKNIKISNDYNIFMIIASRKPSLKDIYKIIKVSKFDEPADLIIEDASYIDIYTKRISSGNIAIASGRIAYIGDEMPLKNNDTRIIKNDFLIAPGYIEGHAHPFQIYNPVTFNEIMIRHGTSMVISDDLPIYIKMGLKNIKRFMRFMGRLPVKNFWSVRLDSQSMIDMEKFSYIKIKELLNDDYVLQAGEITGWPYIINMEKNMLKNIYNSQFLGKRIETHNPGASKNTLNRMAAAGITSDHEAITGEDVKTRLSLGYHVFLRYSSIRKDLKDELKYIIDEKLPLNRLMLTNDGSPYYNDYMGMDDLIKIAISTGLNPFDAYSMASLNPAVYYNIDGIYGGIAPGRLADMNFIRDLYNPEPVFLMLDGKIIDKEVKLDPPDWKGYGMLYKNRNIDINKINFNGSDETLFMRNQVIMDLNKYKMEDSMEIHLITKDLKRIVSSNIHGMGQFDALASSYNIEGSYIVIGSSHDLMKKALKEVIKNGGIVFNGNKNIRIELKILGIMSDKHSDDVRNITEEFRSTMRGSGYKFDDPVYSMLFLNSINLPYYRITSSGIVEVKTRKIIKKPVSLKI</sequence>
<gene>
    <name type="ordered locus">PTO1085</name>
</gene>
<comment type="catalytic activity">
    <reaction>
        <text>adenine + H2O + H(+) = hypoxanthine + NH4(+)</text>
        <dbReference type="Rhea" id="RHEA:23688"/>
        <dbReference type="ChEBI" id="CHEBI:15377"/>
        <dbReference type="ChEBI" id="CHEBI:15378"/>
        <dbReference type="ChEBI" id="CHEBI:16708"/>
        <dbReference type="ChEBI" id="CHEBI:17368"/>
        <dbReference type="ChEBI" id="CHEBI:28938"/>
        <dbReference type="EC" id="3.5.4.2"/>
    </reaction>
</comment>
<comment type="similarity">
    <text evidence="1">Belongs to the metallo-dependent hydrolases superfamily. Adenine deaminase family.</text>
</comment>
<organism>
    <name type="scientific">Picrophilus torridus (strain ATCC 700027 / DSM 9790 / JCM 10055 / NBRC 100828 / KAW 2/3)</name>
    <dbReference type="NCBI Taxonomy" id="1122961"/>
    <lineage>
        <taxon>Archaea</taxon>
        <taxon>Methanobacteriati</taxon>
        <taxon>Thermoplasmatota</taxon>
        <taxon>Thermoplasmata</taxon>
        <taxon>Thermoplasmatales</taxon>
        <taxon>Picrophilaceae</taxon>
        <taxon>Picrophilus</taxon>
    </lineage>
</organism>
<proteinExistence type="inferred from homology"/>
<dbReference type="EC" id="3.5.4.2"/>
<dbReference type="EMBL" id="AE017261">
    <property type="protein sequence ID" value="AAT43670.1"/>
    <property type="molecule type" value="Genomic_DNA"/>
</dbReference>
<dbReference type="SMR" id="Q6L032"/>
<dbReference type="STRING" id="263820.PTO1085"/>
<dbReference type="PaxDb" id="263820-PTO1085"/>
<dbReference type="KEGG" id="pto:PTO1085"/>
<dbReference type="PATRIC" id="fig|263820.9.peg.1125"/>
<dbReference type="eggNOG" id="arCOG00693">
    <property type="taxonomic scope" value="Archaea"/>
</dbReference>
<dbReference type="HOGENOM" id="CLU_027935_0_0_2"/>
<dbReference type="InParanoid" id="Q6L032"/>
<dbReference type="Proteomes" id="UP000000438">
    <property type="component" value="Chromosome"/>
</dbReference>
<dbReference type="GO" id="GO:0000034">
    <property type="term" value="F:adenine deaminase activity"/>
    <property type="evidence" value="ECO:0007669"/>
    <property type="project" value="UniProtKB-EC"/>
</dbReference>
<dbReference type="Gene3D" id="3.20.20.140">
    <property type="entry name" value="Metal-dependent hydrolases"/>
    <property type="match status" value="1"/>
</dbReference>
<dbReference type="Gene3D" id="2.30.40.10">
    <property type="entry name" value="Urease, subunit C, domain 1"/>
    <property type="match status" value="1"/>
</dbReference>
<dbReference type="InterPro" id="IPR026912">
    <property type="entry name" value="Adenine_deam_C"/>
</dbReference>
<dbReference type="InterPro" id="IPR006680">
    <property type="entry name" value="Amidohydro-rel"/>
</dbReference>
<dbReference type="InterPro" id="IPR011059">
    <property type="entry name" value="Metal-dep_hydrolase_composite"/>
</dbReference>
<dbReference type="InterPro" id="IPR032466">
    <property type="entry name" value="Metal_Hydrolase"/>
</dbReference>
<dbReference type="PANTHER" id="PTHR11113:SF6">
    <property type="entry name" value="ADENINE DEAMINASE YERA-RELATED"/>
    <property type="match status" value="1"/>
</dbReference>
<dbReference type="PANTHER" id="PTHR11113">
    <property type="entry name" value="N-ACETYLGLUCOSAMINE-6-PHOSPHATE DEACETYLASE"/>
    <property type="match status" value="1"/>
</dbReference>
<dbReference type="Pfam" id="PF13382">
    <property type="entry name" value="Adenine_deam_C"/>
    <property type="match status" value="1"/>
</dbReference>
<dbReference type="Pfam" id="PF01979">
    <property type="entry name" value="Amidohydro_1"/>
    <property type="match status" value="1"/>
</dbReference>
<dbReference type="SUPFAM" id="SSF51338">
    <property type="entry name" value="Composite domain of metallo-dependent hydrolases"/>
    <property type="match status" value="1"/>
</dbReference>
<dbReference type="SUPFAM" id="SSF51556">
    <property type="entry name" value="Metallo-dependent hydrolases"/>
    <property type="match status" value="1"/>
</dbReference>
<feature type="chain" id="PRO_0000142449" description="Putative adenine deaminase PTO1085">
    <location>
        <begin position="1"/>
        <end position="573"/>
    </location>
</feature>
<name>Y1085_PICTO</name>
<protein>
    <recommendedName>
        <fullName>Putative adenine deaminase PTO1085</fullName>
        <shortName>Adenase</shortName>
        <shortName>Adenine aminase</shortName>
        <ecNumber>3.5.4.2</ecNumber>
    </recommendedName>
</protein>
<reference key="1">
    <citation type="journal article" date="2004" name="Proc. Natl. Acad. Sci. U.S.A.">
        <title>Genome sequence of Picrophilus torridus and its implications for life around pH 0.</title>
        <authorList>
            <person name="Fuetterer O."/>
            <person name="Angelov A."/>
            <person name="Liesegang H."/>
            <person name="Gottschalk G."/>
            <person name="Schleper C."/>
            <person name="Schepers B."/>
            <person name="Dock C."/>
            <person name="Antranikian G."/>
            <person name="Liebl W."/>
        </authorList>
    </citation>
    <scope>NUCLEOTIDE SEQUENCE [LARGE SCALE GENOMIC DNA]</scope>
    <source>
        <strain>ATCC 700027 / DSM 9790 / JCM 10055 / NBRC 100828 / KAW 2/3</strain>
    </source>
</reference>
<keyword id="KW-0378">Hydrolase</keyword>
<accession>Q6L032</accession>